<comment type="function">
    <text evidence="1 5 6">Permease that is involved in the active transport across the cytoplasmic membrane of all three aromatic amino acids, phenylalanine, tyrosine and tryptophan.</text>
</comment>
<comment type="catalytic activity">
    <reaction evidence="12 13 14">
        <text>L-phenylalanine(in) + H(+)(in) = L-phenylalanine(out) + H(+)(out)</text>
        <dbReference type="Rhea" id="RHEA:28923"/>
        <dbReference type="ChEBI" id="CHEBI:15378"/>
        <dbReference type="ChEBI" id="CHEBI:58095"/>
    </reaction>
    <physiologicalReaction direction="right-to-left" evidence="12 13 14">
        <dbReference type="Rhea" id="RHEA:28925"/>
    </physiologicalReaction>
</comment>
<comment type="catalytic activity">
    <reaction evidence="12 13">
        <text>L-tryptophan(in) + H(+)(in) = L-tryptophan(out) + H(+)(out)</text>
        <dbReference type="Rhea" id="RHEA:28879"/>
        <dbReference type="ChEBI" id="CHEBI:15378"/>
        <dbReference type="ChEBI" id="CHEBI:57912"/>
    </reaction>
    <physiologicalReaction direction="right-to-left" evidence="12 13">
        <dbReference type="Rhea" id="RHEA:28881"/>
    </physiologicalReaction>
</comment>
<comment type="catalytic activity">
    <reaction evidence="12 13 14">
        <text>L-tyrosine(in) + H(+)(in) = L-tyrosine(out) + H(+)(out)</text>
        <dbReference type="Rhea" id="RHEA:28875"/>
        <dbReference type="ChEBI" id="CHEBI:15378"/>
        <dbReference type="ChEBI" id="CHEBI:58315"/>
    </reaction>
    <physiologicalReaction direction="right-to-left" evidence="12 13 14">
        <dbReference type="Rhea" id="RHEA:28877"/>
    </physiologicalReaction>
</comment>
<comment type="activity regulation">
    <text evidence="5">Strong, mutual inhibition of uptake by tyrosine, phenylalanine, and tryptophan. Transport is also inhibited by the aromatic analogs p-fluorophenylalanine, beta-2-thienylalanine and 5-methyltryptophan.</text>
</comment>
<comment type="biophysicochemical properties">
    <kinetics>
        <KM evidence="5">0.47 uM for phenylalanine</KM>
        <KM evidence="5">0.4 uM for tryptophan</KM>
        <KM evidence="5">0.57 uM for tyrosine</KM>
    </kinetics>
</comment>
<comment type="subcellular location">
    <subcellularLocation>
        <location evidence="3 4 6">Cell inner membrane</location>
        <topology evidence="6">Multi-pass membrane protein</topology>
    </subcellularLocation>
</comment>
<comment type="induction">
    <text evidence="2 7 8">Contains three promoters, P1, P2 and P3 (PubMed:9209034, PubMed:9765583). Repressed by the regulatory protein TyrR, which binds to TyrR boxes (PubMed:14614536, PubMed:9209034, PubMed:9765583). In the absence of TyrR, the RNA polymerase (RNAP) has a higher affinity for P1 than for P2 and P3 and occupies the P1 promoter region (PubMed:9765583). When TyrR and its cofactors are present, TyrR inhibits the binding of RNA polymerase to the P1 promoter by recruiting RNA polymerase to the P3 promoter (PubMed:9765583). P1 is not repressed by TyrR alone but is repressed in the presence of phenylalanine, tyrosine or tryptophan (PubMed:9209034). P2 is partially repressed by TyrR alone and totally repressed by TyrR in the presence of tyrosine, phenylalanine or tryptophan (PubMed:9209034).</text>
</comment>
<comment type="disruption phenotype">
    <text evidence="5">Mutants show reduced aromatic amino acids transport and are resistant to p-fluorophenylalanine, beta-2-thienylalanine and 5-methyltryptophan.</text>
</comment>
<comment type="miscellaneous">
    <text evidence="5">The general aromatic transport system is not essential for the supply of external aromatic amino acids to protein synthesis.</text>
</comment>
<comment type="similarity">
    <text evidence="11">Belongs to the amino acid-polyamine-organocation (APC) superfamily. Amino acid transporter (AAT) (TC 2.A.3.1) family.</text>
</comment>
<feature type="chain" id="PRO_0000054193" description="Aromatic amino acid transport protein AroP">
    <location>
        <begin position="1"/>
        <end position="457"/>
    </location>
</feature>
<feature type="topological domain" description="Cytoplasmic" evidence="6">
    <location>
        <begin position="1"/>
        <end position="18"/>
    </location>
</feature>
<feature type="transmembrane region" description="Helical" evidence="14">
    <location>
        <begin position="19"/>
        <end position="39"/>
    </location>
</feature>
<feature type="topological domain" description="Periplasmic" evidence="6">
    <location>
        <begin position="40"/>
        <end position="42"/>
    </location>
</feature>
<feature type="transmembrane region" description="Helical" evidence="14">
    <location>
        <begin position="43"/>
        <end position="63"/>
    </location>
</feature>
<feature type="topological domain" description="Cytoplasmic" evidence="6">
    <location>
        <begin position="64"/>
        <end position="98"/>
    </location>
</feature>
<feature type="transmembrane region" description="Helical" evidence="14">
    <location>
        <begin position="99"/>
        <end position="119"/>
    </location>
</feature>
<feature type="topological domain" description="Periplasmic" evidence="6">
    <location>
        <begin position="120"/>
        <end position="124"/>
    </location>
</feature>
<feature type="transmembrane region" description="Helical" evidence="14">
    <location>
        <begin position="125"/>
        <end position="145"/>
    </location>
</feature>
<feature type="topological domain" description="Cytoplasmic" evidence="6">
    <location>
        <begin position="146"/>
        <end position="147"/>
    </location>
</feature>
<feature type="transmembrane region" description="Helical" evidence="14">
    <location>
        <begin position="148"/>
        <end position="168"/>
    </location>
</feature>
<feature type="topological domain" description="Periplasmic" evidence="6">
    <location>
        <begin position="169"/>
        <end position="192"/>
    </location>
</feature>
<feature type="transmembrane region" description="Helical" evidence="14">
    <location>
        <begin position="193"/>
        <end position="213"/>
    </location>
</feature>
<feature type="topological domain" description="Cytoplasmic" evidence="6">
    <location>
        <begin position="214"/>
        <end position="239"/>
    </location>
</feature>
<feature type="transmembrane region" description="Helical" evidence="14">
    <location>
        <begin position="240"/>
        <end position="260"/>
    </location>
</feature>
<feature type="topological domain" description="Periplasmic" evidence="6">
    <location>
        <begin position="261"/>
        <end position="279"/>
    </location>
</feature>
<feature type="transmembrane region" description="Helical" evidence="14">
    <location>
        <begin position="280"/>
        <end position="300"/>
    </location>
</feature>
<feature type="topological domain" description="Cytoplasmic" evidence="6">
    <location>
        <begin position="301"/>
        <end position="330"/>
    </location>
</feature>
<feature type="transmembrane region" description="Helical" evidence="14">
    <location>
        <begin position="331"/>
        <end position="351"/>
    </location>
</feature>
<feature type="topological domain" description="Periplasmic" evidence="6">
    <location>
        <begin position="352"/>
        <end position="359"/>
    </location>
</feature>
<feature type="transmembrane region" description="Helical" evidence="14">
    <location>
        <begin position="360"/>
        <end position="380"/>
    </location>
</feature>
<feature type="topological domain" description="Cytoplasmic" evidence="6">
    <location>
        <begin position="381"/>
        <end position="402"/>
    </location>
</feature>
<feature type="transmembrane region" description="Helical" evidence="14">
    <location>
        <begin position="403"/>
        <end position="423"/>
    </location>
</feature>
<feature type="topological domain" description="Periplasmic" evidence="6">
    <location>
        <begin position="424"/>
        <end position="426"/>
    </location>
</feature>
<feature type="transmembrane region" description="Helical" evidence="14">
    <location>
        <begin position="427"/>
        <end position="447"/>
    </location>
</feature>
<feature type="topological domain" description="Cytoplasmic" evidence="3 6">
    <location>
        <begin position="448"/>
        <end position="457"/>
    </location>
</feature>
<feature type="site" description="Key residue for tryptophan transport" evidence="1">
    <location>
        <position position="103"/>
    </location>
</feature>
<feature type="mutagenesis site" description="Decreases tryptophan transport to less than 50% of wild-type levels and reduces the ability of tryptophan to inhibit phenylalanine transport from 95 to 62%." evidence="1">
    <original>Y</original>
    <variation>F</variation>
    <location>
        <position position="103"/>
    </location>
</feature>
<feature type="sequence conflict" description="In Ref. 1; CAA35211." evidence="11" ref="1">
    <original>A</original>
    <variation>S</variation>
    <location>
        <position position="28"/>
    </location>
</feature>
<feature type="sequence conflict" description="In Ref. 1; CAA35211 and 2; AAC45299." evidence="11" ref="1 2">
    <original>G</original>
    <variation>A</variation>
    <location>
        <position position="199"/>
    </location>
</feature>
<feature type="sequence conflict" description="In Ref. 1; CAA35211." evidence="11" ref="1">
    <original>PA</original>
    <variation>L</variation>
    <location>
        <begin position="398"/>
        <end position="399"/>
    </location>
</feature>
<feature type="sequence conflict" description="In Ref. 1; CAA35211 and 2; AAC45299." evidence="11" ref="1 2">
    <original>P</original>
    <variation>R</variation>
    <location>
        <position position="424"/>
    </location>
</feature>
<feature type="sequence conflict" description="In Ref. 1; CAA35211." evidence="11" ref="1">
    <original>A</original>
    <variation>G</variation>
    <location>
        <position position="427"/>
    </location>
</feature>
<feature type="sequence conflict" description="In Ref. 1; CAA35211." evidence="11" ref="1">
    <original>S</original>
    <variation>W</variation>
    <location>
        <position position="429"/>
    </location>
</feature>
<sequence length="457" mass="49690">MMEGQQHGEQLKRGLKNRHIQLIALGGAIGTGLFLGSASVIQSAGPGIILGYAIAGFIAFLIMRQLGEMVVEEPVAGSFSHFAYKYWGSFAGFASGWNYWVLYVLVAMAELTAVGKYIQFWYPEIPTWVSAAVFFVVINAINLTNVKVFGEMEFWFAIIKVIAVVAMIIFGGWLLFSGNGGPQATVSNLWDQGGFLPHGFTGLVMMMAIIMFSFGGLELVGITAAEADNPEQSIPKATNQVIYRILIFYIGSLAVLLSLMPWTRVTADTSPFVLIFHELGDTFVANALNIVVLTAALSVYNSCVYCNSRMLFGLAQQGNAPKALASVDKRGVPVNTILVSALVTALCVLINYLAPESAFGLLMALVVSALVINWAMISLAHMKFRRAKQEQGVVTRFPALLYPLGNWICLLFMAAVLVIMLMTPGMAISVYLIPVWLIVLGIGYLFKEKTAKAVKAH</sequence>
<dbReference type="EMBL" id="X17333">
    <property type="protein sequence ID" value="CAA35211.1"/>
    <property type="molecule type" value="Genomic_DNA"/>
</dbReference>
<dbReference type="EMBL" id="U87285">
    <property type="protein sequence ID" value="AAC45299.1"/>
    <property type="molecule type" value="Genomic_DNA"/>
</dbReference>
<dbReference type="EMBL" id="U00096">
    <property type="protein sequence ID" value="AAC73223.1"/>
    <property type="molecule type" value="Genomic_DNA"/>
</dbReference>
<dbReference type="EMBL" id="AP009048">
    <property type="protein sequence ID" value="BAB96681.2"/>
    <property type="molecule type" value="Genomic_DNA"/>
</dbReference>
<dbReference type="PIR" id="H64733">
    <property type="entry name" value="QRECAA"/>
</dbReference>
<dbReference type="RefSeq" id="NP_414654.1">
    <property type="nucleotide sequence ID" value="NC_000913.3"/>
</dbReference>
<dbReference type="RefSeq" id="WP_000969915.1">
    <property type="nucleotide sequence ID" value="NZ_SSZK01000004.1"/>
</dbReference>
<dbReference type="SMR" id="P15993"/>
<dbReference type="BioGRID" id="4259731">
    <property type="interactions" value="11"/>
</dbReference>
<dbReference type="FunCoup" id="P15993">
    <property type="interactions" value="121"/>
</dbReference>
<dbReference type="STRING" id="511145.b0112"/>
<dbReference type="TCDB" id="2.A.3.1.3">
    <property type="family name" value="the amino acid-polyamine-organocation (apc) family"/>
</dbReference>
<dbReference type="PaxDb" id="511145-b0112"/>
<dbReference type="EnsemblBacteria" id="AAC73223">
    <property type="protein sequence ID" value="AAC73223"/>
    <property type="gene ID" value="b0112"/>
</dbReference>
<dbReference type="GeneID" id="75202073"/>
<dbReference type="GeneID" id="946018"/>
<dbReference type="KEGG" id="ecj:JW0108"/>
<dbReference type="KEGG" id="eco:b0112"/>
<dbReference type="PATRIC" id="fig|511145.12.peg.114"/>
<dbReference type="EchoBASE" id="EB0082"/>
<dbReference type="eggNOG" id="COG1113">
    <property type="taxonomic scope" value="Bacteria"/>
</dbReference>
<dbReference type="HOGENOM" id="CLU_007946_9_3_6"/>
<dbReference type="InParanoid" id="P15993"/>
<dbReference type="OMA" id="LFKALWY"/>
<dbReference type="PhylomeDB" id="P15993"/>
<dbReference type="BioCyc" id="EcoCyc:AROP-MONOMER"/>
<dbReference type="BioCyc" id="MetaCyc:AROP-MONOMER"/>
<dbReference type="PRO" id="PR:P15993"/>
<dbReference type="Proteomes" id="UP000000625">
    <property type="component" value="Chromosome"/>
</dbReference>
<dbReference type="GO" id="GO:0005886">
    <property type="term" value="C:plasma membrane"/>
    <property type="evidence" value="ECO:0000314"/>
    <property type="project" value="EcoCyc"/>
</dbReference>
<dbReference type="GO" id="GO:0015192">
    <property type="term" value="F:L-phenylalanine transmembrane transporter activity"/>
    <property type="evidence" value="ECO:0000314"/>
    <property type="project" value="EcoCyc"/>
</dbReference>
<dbReference type="GO" id="GO:0015196">
    <property type="term" value="F:L-tryptophan transmembrane transporter activity"/>
    <property type="evidence" value="ECO:0000314"/>
    <property type="project" value="EcoCyc"/>
</dbReference>
<dbReference type="GO" id="GO:0005302">
    <property type="term" value="F:L-tyrosine transmembrane transporter activity"/>
    <property type="evidence" value="ECO:0000314"/>
    <property type="project" value="EcoCyc"/>
</dbReference>
<dbReference type="GO" id="GO:0015823">
    <property type="term" value="P:phenylalanine transport"/>
    <property type="evidence" value="ECO:0000314"/>
    <property type="project" value="EcoCyc"/>
</dbReference>
<dbReference type="GO" id="GO:0015827">
    <property type="term" value="P:tryptophan transport"/>
    <property type="evidence" value="ECO:0000314"/>
    <property type="project" value="EcoCyc"/>
</dbReference>
<dbReference type="GO" id="GO:0015828">
    <property type="term" value="P:tyrosine transport"/>
    <property type="evidence" value="ECO:0000314"/>
    <property type="project" value="EcoCyc"/>
</dbReference>
<dbReference type="FunFam" id="1.20.1740.10:FF:000001">
    <property type="entry name" value="Amino acid permease"/>
    <property type="match status" value="1"/>
</dbReference>
<dbReference type="Gene3D" id="1.20.1740.10">
    <property type="entry name" value="Amino acid/polyamine transporter I"/>
    <property type="match status" value="1"/>
</dbReference>
<dbReference type="InterPro" id="IPR004841">
    <property type="entry name" value="AA-permease/SLC12A_dom"/>
</dbReference>
<dbReference type="InterPro" id="IPR004840">
    <property type="entry name" value="Amino_acid_permease_CS"/>
</dbReference>
<dbReference type="NCBIfam" id="NF007594">
    <property type="entry name" value="PRK10238.1"/>
    <property type="match status" value="1"/>
</dbReference>
<dbReference type="PANTHER" id="PTHR43495:SF4">
    <property type="entry name" value="AROMATIC AMINO ACID TRANSPORT PROTEIN AROP"/>
    <property type="match status" value="1"/>
</dbReference>
<dbReference type="PANTHER" id="PTHR43495">
    <property type="entry name" value="GABA PERMEASE"/>
    <property type="match status" value="1"/>
</dbReference>
<dbReference type="Pfam" id="PF00324">
    <property type="entry name" value="AA_permease"/>
    <property type="match status" value="1"/>
</dbReference>
<dbReference type="PIRSF" id="PIRSF006060">
    <property type="entry name" value="AA_transporter"/>
    <property type="match status" value="1"/>
</dbReference>
<dbReference type="PROSITE" id="PS00218">
    <property type="entry name" value="AMINO_ACID_PERMEASE_1"/>
    <property type="match status" value="1"/>
</dbReference>
<evidence type="ECO:0000269" key="1">
    <source>
    </source>
</evidence>
<evidence type="ECO:0000269" key="2">
    <source>
    </source>
</evidence>
<evidence type="ECO:0000269" key="3">
    <source>
    </source>
</evidence>
<evidence type="ECO:0000269" key="4">
    <source>
    </source>
</evidence>
<evidence type="ECO:0000269" key="5">
    <source>
    </source>
</evidence>
<evidence type="ECO:0000269" key="6">
    <source>
    </source>
</evidence>
<evidence type="ECO:0000269" key="7">
    <source>
    </source>
</evidence>
<evidence type="ECO:0000269" key="8">
    <source>
    </source>
</evidence>
<evidence type="ECO:0000303" key="9">
    <source>
    </source>
</evidence>
<evidence type="ECO:0000303" key="10">
    <source>
    </source>
</evidence>
<evidence type="ECO:0000305" key="11"/>
<evidence type="ECO:0000305" key="12">
    <source>
    </source>
</evidence>
<evidence type="ECO:0000305" key="13">
    <source>
    </source>
</evidence>
<evidence type="ECO:0000305" key="14">
    <source>
    </source>
</evidence>
<protein>
    <recommendedName>
        <fullName evidence="11">Aromatic amino acid transport protein AroP</fullName>
    </recommendedName>
    <alternativeName>
        <fullName evidence="11">Aromatic amino acid:H(+) symporter AroP</fullName>
    </alternativeName>
    <alternativeName>
        <fullName evidence="10">General aromatic amino acid permease</fullName>
    </alternativeName>
    <alternativeName>
        <fullName evidence="9">General aromatic transport system</fullName>
    </alternativeName>
</protein>
<gene>
    <name evidence="9" type="primary">aroP</name>
    <name type="ordered locus">b0112</name>
    <name type="ordered locus">JW0108</name>
</gene>
<name>AROP_ECOLI</name>
<proteinExistence type="evidence at protein level"/>
<keyword id="KW-0029">Amino-acid transport</keyword>
<keyword id="KW-0997">Cell inner membrane</keyword>
<keyword id="KW-1003">Cell membrane</keyword>
<keyword id="KW-0472">Membrane</keyword>
<keyword id="KW-1185">Reference proteome</keyword>
<keyword id="KW-0812">Transmembrane</keyword>
<keyword id="KW-1133">Transmembrane helix</keyword>
<keyword id="KW-0813">Transport</keyword>
<reference key="1">
    <citation type="journal article" date="1990" name="Nucleic Acids Res.">
        <title>Nucleotide sequence of the aroP gene encoding the general aromatic amino acid transport protein of Escherichia coli K-12: homology with yeast transport proteins.</title>
        <authorList>
            <person name="Honore N."/>
            <person name="Cole S.T."/>
        </authorList>
    </citation>
    <scope>NUCLEOTIDE SEQUENCE [GENOMIC DNA]</scope>
    <source>
        <strain>K12</strain>
    </source>
</reference>
<reference key="2">
    <citation type="journal article" date="1997" name="J. Bacteriol.">
        <title>A topological model for the general aromatic amino acid permease, AroP, of Escherichia coli.</title>
        <authorList>
            <person name="Cosgriff A.J."/>
            <person name="Pittard A.J."/>
        </authorList>
    </citation>
    <scope>NUCLEOTIDE SEQUENCE [GENOMIC DNA]</scope>
    <scope>FUNCTION</scope>
    <scope>CATALYTIC ACTIVITY</scope>
    <scope>SUBCELLULAR LOCATION</scope>
    <scope>TOPOLOGY</scope>
    <source>
        <strain>K12</strain>
    </source>
</reference>
<reference key="3">
    <citation type="journal article" date="1994" name="Nucleic Acids Res.">
        <title>Systematic sequencing of the Escherichia coli genome: analysis of the 2.4-4.1 min (110,917-193,643 bp) region.</title>
        <authorList>
            <person name="Fujita N."/>
            <person name="Mori H."/>
            <person name="Yura T."/>
            <person name="Ishihama A."/>
        </authorList>
    </citation>
    <scope>NUCLEOTIDE SEQUENCE [LARGE SCALE GENOMIC DNA]</scope>
    <source>
        <strain>K12 / W3110 / ATCC 27325 / DSM 5911</strain>
    </source>
</reference>
<reference key="4">
    <citation type="journal article" date="1997" name="Science">
        <title>The complete genome sequence of Escherichia coli K-12.</title>
        <authorList>
            <person name="Blattner F.R."/>
            <person name="Plunkett G. III"/>
            <person name="Bloch C.A."/>
            <person name="Perna N.T."/>
            <person name="Burland V."/>
            <person name="Riley M."/>
            <person name="Collado-Vides J."/>
            <person name="Glasner J.D."/>
            <person name="Rode C.K."/>
            <person name="Mayhew G.F."/>
            <person name="Gregor J."/>
            <person name="Davis N.W."/>
            <person name="Kirkpatrick H.A."/>
            <person name="Goeden M.A."/>
            <person name="Rose D.J."/>
            <person name="Mau B."/>
            <person name="Shao Y."/>
        </authorList>
    </citation>
    <scope>NUCLEOTIDE SEQUENCE [LARGE SCALE GENOMIC DNA]</scope>
    <source>
        <strain>K12 / MG1655 / ATCC 47076</strain>
    </source>
</reference>
<reference key="5">
    <citation type="journal article" date="2006" name="Mol. Syst. Biol.">
        <title>Highly accurate genome sequences of Escherichia coli K-12 strains MG1655 and W3110.</title>
        <authorList>
            <person name="Hayashi K."/>
            <person name="Morooka N."/>
            <person name="Yamamoto Y."/>
            <person name="Fujita K."/>
            <person name="Isono K."/>
            <person name="Choi S."/>
            <person name="Ohtsubo E."/>
            <person name="Baba T."/>
            <person name="Wanner B.L."/>
            <person name="Mori H."/>
            <person name="Horiuchi T."/>
        </authorList>
    </citation>
    <scope>NUCLEOTIDE SEQUENCE [LARGE SCALE GENOMIC DNA]</scope>
    <scope>SEQUENCE REVISION</scope>
    <source>
        <strain>K12 / W3110 / ATCC 27325 / DSM 5911</strain>
    </source>
</reference>
<reference key="6">
    <citation type="journal article" date="1970" name="J. Bacteriol.">
        <title>Formation of aromatic amino acid pools in Escherichia coli K-12.</title>
        <authorList>
            <person name="Brown K.D."/>
        </authorList>
    </citation>
    <scope>FUNCTION</scope>
    <scope>CATALYTIC ACTIVITY</scope>
    <scope>ACTIVITY REGULATION</scope>
    <scope>BIOPHYSICOCHEMICAL PROPERTIES</scope>
    <scope>DISRUPTION PHENOTYPE</scope>
    <source>
        <strain>K12</strain>
    </source>
</reference>
<reference key="7">
    <citation type="journal article" date="1986" name="J. Bacteriol.">
        <title>Cloning of the aroP gene and identification of its product in Escherichia coli K-12.</title>
        <authorList>
            <person name="Chye M.L."/>
            <person name="Guest J.R."/>
            <person name="Pittard J."/>
        </authorList>
    </citation>
    <scope>SUBCELLULAR LOCATION</scope>
</reference>
<reference key="8">
    <citation type="journal article" date="1997" name="J. Bacteriol.">
        <title>Promoters and transcripts associated with the aroP gene of Escherichia coli.</title>
        <authorList>
            <person name="Wang P."/>
            <person name="Yang J."/>
            <person name="Pittard A.J."/>
        </authorList>
    </citation>
    <scope>TRANSCRIPTIONAL REGULATION</scope>
    <source>
        <strain>K12</strain>
    </source>
</reference>
<reference key="9">
    <citation type="journal article" date="1998" name="J. Bacteriol.">
        <title>Demonstration that the TyrR protein and RNA polymerase complex formed at the divergent P3 promoter inhibits binding of RNA polymerase to the major promoter, P1, of the aroP gene of Escherichia coli.</title>
        <authorList>
            <person name="Wang P."/>
            <person name="Yang J."/>
            <person name="Ishihama A."/>
            <person name="Pittard A.J."/>
        </authorList>
    </citation>
    <scope>TRANSCRIPTIONAL REGULATION</scope>
</reference>
<reference key="10">
    <citation type="journal article" date="2000" name="J. Bacteriol.">
        <title>A study of AroP-PheP chimeric proteins and identification of a residue involved in tryptophan transport.</title>
        <authorList>
            <person name="Cosgriff A.J."/>
            <person name="Brasier G."/>
            <person name="Pi J."/>
            <person name="Dogovski C."/>
            <person name="Sarsero J.P."/>
            <person name="Pittard A.J."/>
        </authorList>
    </citation>
    <scope>FUNCTION</scope>
    <scope>CATALYTIC ACTIVITY</scope>
    <scope>MUTAGENESIS OF TYR-103</scope>
    <source>
        <strain>K12</strain>
    </source>
</reference>
<reference key="11">
    <citation type="journal article" date="2003" name="Sheng Wu Hua Xue Yu Sheng Wu Wu Li Xue Bao">
        <title>Regulation of aroP expression by tyrR gene in Escherichia coli.</title>
        <authorList>
            <person name="Wang J.G."/>
            <person name="Fan C.S."/>
            <person name="Wu Y.Q."/>
            <person name="Jin R.L."/>
            <person name="Liu D.X."/>
            <person name="Shang L."/>
            <person name="Jiang P.H."/>
        </authorList>
    </citation>
    <scope>TRANSCRIPTIONAL REGULATION</scope>
    <source>
        <strain>K12</strain>
    </source>
</reference>
<reference key="12">
    <citation type="journal article" date="2005" name="Science">
        <title>Global topology analysis of the Escherichia coli inner membrane proteome.</title>
        <authorList>
            <person name="Daley D.O."/>
            <person name="Rapp M."/>
            <person name="Granseth E."/>
            <person name="Melen K."/>
            <person name="Drew D."/>
            <person name="von Heijne G."/>
        </authorList>
    </citation>
    <scope>TOPOLOGY [LARGE SCALE ANALYSIS]</scope>
    <scope>SUBCELLULAR LOCATION</scope>
    <source>
        <strain>K12 / MG1655 / ATCC 47076</strain>
    </source>
</reference>
<organism>
    <name type="scientific">Escherichia coli (strain K12)</name>
    <dbReference type="NCBI Taxonomy" id="83333"/>
    <lineage>
        <taxon>Bacteria</taxon>
        <taxon>Pseudomonadati</taxon>
        <taxon>Pseudomonadota</taxon>
        <taxon>Gammaproteobacteria</taxon>
        <taxon>Enterobacterales</taxon>
        <taxon>Enterobacteriaceae</taxon>
        <taxon>Escherichia</taxon>
    </lineage>
</organism>
<accession>P15993</accession>
<accession>P75650</accession>